<name>TRMB_ALKMQ</name>
<organism>
    <name type="scientific">Alkaliphilus metalliredigens (strain QYMF)</name>
    <dbReference type="NCBI Taxonomy" id="293826"/>
    <lineage>
        <taxon>Bacteria</taxon>
        <taxon>Bacillati</taxon>
        <taxon>Bacillota</taxon>
        <taxon>Clostridia</taxon>
        <taxon>Peptostreptococcales</taxon>
        <taxon>Natronincolaceae</taxon>
        <taxon>Alkaliphilus</taxon>
    </lineage>
</organism>
<comment type="function">
    <text evidence="2">Catalyzes the formation of N(7)-methylguanine at position 46 (m7G46) in tRNA.</text>
</comment>
<comment type="catalytic activity">
    <reaction evidence="2">
        <text>guanosine(46) in tRNA + S-adenosyl-L-methionine = N(7)-methylguanosine(46) in tRNA + S-adenosyl-L-homocysteine</text>
        <dbReference type="Rhea" id="RHEA:42708"/>
        <dbReference type="Rhea" id="RHEA-COMP:10188"/>
        <dbReference type="Rhea" id="RHEA-COMP:10189"/>
        <dbReference type="ChEBI" id="CHEBI:57856"/>
        <dbReference type="ChEBI" id="CHEBI:59789"/>
        <dbReference type="ChEBI" id="CHEBI:74269"/>
        <dbReference type="ChEBI" id="CHEBI:74480"/>
        <dbReference type="EC" id="2.1.1.33"/>
    </reaction>
</comment>
<comment type="pathway">
    <text evidence="2">tRNA modification; N(7)-methylguanine-tRNA biosynthesis.</text>
</comment>
<comment type="similarity">
    <text evidence="2">Belongs to the class I-like SAM-binding methyltransferase superfamily. TrmB family.</text>
</comment>
<accession>A6TMJ6</accession>
<feature type="chain" id="PRO_1000064385" description="tRNA (guanine-N(7)-)-methyltransferase">
    <location>
        <begin position="1"/>
        <end position="214"/>
    </location>
</feature>
<feature type="active site" evidence="1">
    <location>
        <position position="121"/>
    </location>
</feature>
<feature type="binding site" evidence="2">
    <location>
        <position position="43"/>
    </location>
    <ligand>
        <name>S-adenosyl-L-methionine</name>
        <dbReference type="ChEBI" id="CHEBI:59789"/>
    </ligand>
</feature>
<feature type="binding site" evidence="2">
    <location>
        <position position="68"/>
    </location>
    <ligand>
        <name>S-adenosyl-L-methionine</name>
        <dbReference type="ChEBI" id="CHEBI:59789"/>
    </ligand>
</feature>
<feature type="binding site" evidence="2">
    <location>
        <position position="99"/>
    </location>
    <ligand>
        <name>S-adenosyl-L-methionine</name>
        <dbReference type="ChEBI" id="CHEBI:59789"/>
    </ligand>
</feature>
<feature type="binding site" evidence="2">
    <location>
        <position position="121"/>
    </location>
    <ligand>
        <name>S-adenosyl-L-methionine</name>
        <dbReference type="ChEBI" id="CHEBI:59789"/>
    </ligand>
</feature>
<feature type="binding site" evidence="2">
    <location>
        <position position="125"/>
    </location>
    <ligand>
        <name>substrate</name>
    </ligand>
</feature>
<feature type="binding site" evidence="2">
    <location>
        <position position="157"/>
    </location>
    <ligand>
        <name>substrate</name>
    </ligand>
</feature>
<feature type="binding site" evidence="2">
    <location>
        <begin position="194"/>
        <end position="197"/>
    </location>
    <ligand>
        <name>substrate</name>
    </ligand>
</feature>
<keyword id="KW-0489">Methyltransferase</keyword>
<keyword id="KW-1185">Reference proteome</keyword>
<keyword id="KW-0949">S-adenosyl-L-methionine</keyword>
<keyword id="KW-0808">Transferase</keyword>
<keyword id="KW-0819">tRNA processing</keyword>
<dbReference type="EC" id="2.1.1.33" evidence="2"/>
<dbReference type="EMBL" id="CP000724">
    <property type="protein sequence ID" value="ABR47414.1"/>
    <property type="molecule type" value="Genomic_DNA"/>
</dbReference>
<dbReference type="RefSeq" id="WP_012062455.1">
    <property type="nucleotide sequence ID" value="NC_009633.1"/>
</dbReference>
<dbReference type="SMR" id="A6TMJ6"/>
<dbReference type="STRING" id="293826.Amet_1206"/>
<dbReference type="KEGG" id="amt:Amet_1206"/>
<dbReference type="eggNOG" id="COG0220">
    <property type="taxonomic scope" value="Bacteria"/>
</dbReference>
<dbReference type="HOGENOM" id="CLU_050910_2_1_9"/>
<dbReference type="OrthoDB" id="9802090at2"/>
<dbReference type="UniPathway" id="UPA00989"/>
<dbReference type="Proteomes" id="UP000001572">
    <property type="component" value="Chromosome"/>
</dbReference>
<dbReference type="GO" id="GO:0043527">
    <property type="term" value="C:tRNA methyltransferase complex"/>
    <property type="evidence" value="ECO:0007669"/>
    <property type="project" value="TreeGrafter"/>
</dbReference>
<dbReference type="GO" id="GO:0008176">
    <property type="term" value="F:tRNA (guanine(46)-N7)-methyltransferase activity"/>
    <property type="evidence" value="ECO:0007669"/>
    <property type="project" value="UniProtKB-UniRule"/>
</dbReference>
<dbReference type="FunFam" id="3.40.50.150:FF:000035">
    <property type="entry name" value="tRNA (guanine-N(7)-)-methyltransferase"/>
    <property type="match status" value="1"/>
</dbReference>
<dbReference type="Gene3D" id="3.40.50.150">
    <property type="entry name" value="Vaccinia Virus protein VP39"/>
    <property type="match status" value="1"/>
</dbReference>
<dbReference type="HAMAP" id="MF_01057">
    <property type="entry name" value="tRNA_methyltr_TrmB"/>
    <property type="match status" value="1"/>
</dbReference>
<dbReference type="InterPro" id="IPR029063">
    <property type="entry name" value="SAM-dependent_MTases_sf"/>
</dbReference>
<dbReference type="InterPro" id="IPR003358">
    <property type="entry name" value="tRNA_(Gua-N-7)_MeTrfase_Trmb"/>
</dbReference>
<dbReference type="InterPro" id="IPR055361">
    <property type="entry name" value="tRNA_methyltr_TrmB_bact"/>
</dbReference>
<dbReference type="NCBIfam" id="NF001080">
    <property type="entry name" value="PRK00121.2-2"/>
    <property type="match status" value="1"/>
</dbReference>
<dbReference type="NCBIfam" id="TIGR00091">
    <property type="entry name" value="tRNA (guanosine(46)-N7)-methyltransferase TrmB"/>
    <property type="match status" value="1"/>
</dbReference>
<dbReference type="PANTHER" id="PTHR23417">
    <property type="entry name" value="3-DEOXY-D-MANNO-OCTULOSONIC-ACID TRANSFERASE/TRNA GUANINE-N 7 - -METHYLTRANSFERASE"/>
    <property type="match status" value="1"/>
</dbReference>
<dbReference type="PANTHER" id="PTHR23417:SF14">
    <property type="entry name" value="PENTACOTRIPEPTIDE-REPEAT REGION OF PRORP DOMAIN-CONTAINING PROTEIN"/>
    <property type="match status" value="1"/>
</dbReference>
<dbReference type="Pfam" id="PF02390">
    <property type="entry name" value="Methyltransf_4"/>
    <property type="match status" value="1"/>
</dbReference>
<dbReference type="SUPFAM" id="SSF53335">
    <property type="entry name" value="S-adenosyl-L-methionine-dependent methyltransferases"/>
    <property type="match status" value="1"/>
</dbReference>
<dbReference type="PROSITE" id="PS51625">
    <property type="entry name" value="SAM_MT_TRMB"/>
    <property type="match status" value="1"/>
</dbReference>
<gene>
    <name evidence="2" type="primary">trmB</name>
    <name type="ordered locus">Amet_1206</name>
</gene>
<proteinExistence type="inferred from homology"/>
<sequence length="214" mass="25387">MRVRHIPGAKEQLKEYEFYIQDPSQYQNQWHLYFQNQHPIHLEVGLGKGQFLTTLAKVHKNINYLGLEKSQEVLLQALKKLDRQVSRQELSNMGLFHYNALDLNEVFGEGNIEKIYLNFSDPWPKERHKKRRLTHQGFLKIYRGLLSEQGEIQIKTDNKALFEFSLQQLKEENFHFVQVIYNLHNDGIKDPFMTEYEEKFVKAGKTIYKCIATV</sequence>
<protein>
    <recommendedName>
        <fullName evidence="2">tRNA (guanine-N(7)-)-methyltransferase</fullName>
        <ecNumber evidence="2">2.1.1.33</ecNumber>
    </recommendedName>
    <alternativeName>
        <fullName evidence="2">tRNA (guanine(46)-N(7))-methyltransferase</fullName>
    </alternativeName>
    <alternativeName>
        <fullName evidence="2">tRNA(m7G46)-methyltransferase</fullName>
    </alternativeName>
</protein>
<evidence type="ECO:0000250" key="1"/>
<evidence type="ECO:0000255" key="2">
    <source>
        <dbReference type="HAMAP-Rule" id="MF_01057"/>
    </source>
</evidence>
<reference key="1">
    <citation type="journal article" date="2016" name="Genome Announc.">
        <title>Complete genome sequence of Alkaliphilus metalliredigens strain QYMF, an alkaliphilic and metal-reducing bacterium isolated from borax-contaminated leachate ponds.</title>
        <authorList>
            <person name="Hwang C."/>
            <person name="Copeland A."/>
            <person name="Lucas S."/>
            <person name="Lapidus A."/>
            <person name="Barry K."/>
            <person name="Detter J.C."/>
            <person name="Glavina Del Rio T."/>
            <person name="Hammon N."/>
            <person name="Israni S."/>
            <person name="Dalin E."/>
            <person name="Tice H."/>
            <person name="Pitluck S."/>
            <person name="Chertkov O."/>
            <person name="Brettin T."/>
            <person name="Bruce D."/>
            <person name="Han C."/>
            <person name="Schmutz J."/>
            <person name="Larimer F."/>
            <person name="Land M.L."/>
            <person name="Hauser L."/>
            <person name="Kyrpides N."/>
            <person name="Mikhailova N."/>
            <person name="Ye Q."/>
            <person name="Zhou J."/>
            <person name="Richardson P."/>
            <person name="Fields M.W."/>
        </authorList>
    </citation>
    <scope>NUCLEOTIDE SEQUENCE [LARGE SCALE GENOMIC DNA]</scope>
    <source>
        <strain>QYMF</strain>
    </source>
</reference>